<gene>
    <name evidence="1" type="primary">lgt</name>
    <name type="ordered locus">VCM66_0632</name>
</gene>
<dbReference type="EC" id="2.5.1.145" evidence="1"/>
<dbReference type="EMBL" id="CP001233">
    <property type="protein sequence ID" value="ACP04955.1"/>
    <property type="molecule type" value="Genomic_DNA"/>
</dbReference>
<dbReference type="RefSeq" id="WP_001135560.1">
    <property type="nucleotide sequence ID" value="NC_012578.1"/>
</dbReference>
<dbReference type="SMR" id="C3LSS9"/>
<dbReference type="GeneID" id="88783956"/>
<dbReference type="KEGG" id="vcm:VCM66_0632"/>
<dbReference type="HOGENOM" id="CLU_013386_1_0_6"/>
<dbReference type="UniPathway" id="UPA00664"/>
<dbReference type="Proteomes" id="UP000001217">
    <property type="component" value="Chromosome I"/>
</dbReference>
<dbReference type="GO" id="GO:0005886">
    <property type="term" value="C:plasma membrane"/>
    <property type="evidence" value="ECO:0007669"/>
    <property type="project" value="UniProtKB-SubCell"/>
</dbReference>
<dbReference type="GO" id="GO:0008961">
    <property type="term" value="F:phosphatidylglycerol-prolipoprotein diacylglyceryl transferase activity"/>
    <property type="evidence" value="ECO:0007669"/>
    <property type="project" value="UniProtKB-UniRule"/>
</dbReference>
<dbReference type="GO" id="GO:0042158">
    <property type="term" value="P:lipoprotein biosynthetic process"/>
    <property type="evidence" value="ECO:0007669"/>
    <property type="project" value="UniProtKB-UniRule"/>
</dbReference>
<dbReference type="HAMAP" id="MF_01147">
    <property type="entry name" value="Lgt"/>
    <property type="match status" value="1"/>
</dbReference>
<dbReference type="InterPro" id="IPR001640">
    <property type="entry name" value="Lgt"/>
</dbReference>
<dbReference type="NCBIfam" id="TIGR00544">
    <property type="entry name" value="lgt"/>
    <property type="match status" value="1"/>
</dbReference>
<dbReference type="PANTHER" id="PTHR30589:SF0">
    <property type="entry name" value="PHOSPHATIDYLGLYCEROL--PROLIPOPROTEIN DIACYLGLYCERYL TRANSFERASE"/>
    <property type="match status" value="1"/>
</dbReference>
<dbReference type="PANTHER" id="PTHR30589">
    <property type="entry name" value="PROLIPOPROTEIN DIACYLGLYCERYL TRANSFERASE"/>
    <property type="match status" value="1"/>
</dbReference>
<dbReference type="Pfam" id="PF01790">
    <property type="entry name" value="LGT"/>
    <property type="match status" value="1"/>
</dbReference>
<dbReference type="PROSITE" id="PS01311">
    <property type="entry name" value="LGT"/>
    <property type="match status" value="1"/>
</dbReference>
<evidence type="ECO:0000255" key="1">
    <source>
        <dbReference type="HAMAP-Rule" id="MF_01147"/>
    </source>
</evidence>
<feature type="chain" id="PRO_1000164156" description="Phosphatidylglycerol--prolipoprotein diacylglyceryl transferase">
    <location>
        <begin position="1"/>
        <end position="271"/>
    </location>
</feature>
<feature type="transmembrane region" description="Helical" evidence="1">
    <location>
        <begin position="21"/>
        <end position="41"/>
    </location>
</feature>
<feature type="transmembrane region" description="Helical" evidence="1">
    <location>
        <begin position="60"/>
        <end position="80"/>
    </location>
</feature>
<feature type="transmembrane region" description="Helical" evidence="1">
    <location>
        <begin position="95"/>
        <end position="115"/>
    </location>
</feature>
<feature type="transmembrane region" description="Helical" evidence="1">
    <location>
        <begin position="124"/>
        <end position="144"/>
    </location>
</feature>
<feature type="transmembrane region" description="Helical" evidence="1">
    <location>
        <begin position="177"/>
        <end position="197"/>
    </location>
</feature>
<feature type="transmembrane region" description="Helical" evidence="1">
    <location>
        <begin position="203"/>
        <end position="223"/>
    </location>
</feature>
<feature type="transmembrane region" description="Helical" evidence="1">
    <location>
        <begin position="236"/>
        <end position="256"/>
    </location>
</feature>
<feature type="binding site" evidence="1">
    <location>
        <position position="143"/>
    </location>
    <ligand>
        <name>a 1,2-diacyl-sn-glycero-3-phospho-(1'-sn-glycerol)</name>
        <dbReference type="ChEBI" id="CHEBI:64716"/>
    </ligand>
</feature>
<reference key="1">
    <citation type="journal article" date="2008" name="PLoS ONE">
        <title>A recalibrated molecular clock and independent origins for the cholera pandemic clones.</title>
        <authorList>
            <person name="Feng L."/>
            <person name="Reeves P.R."/>
            <person name="Lan R."/>
            <person name="Ren Y."/>
            <person name="Gao C."/>
            <person name="Zhou Z."/>
            <person name="Ren Y."/>
            <person name="Cheng J."/>
            <person name="Wang W."/>
            <person name="Wang J."/>
            <person name="Qian W."/>
            <person name="Li D."/>
            <person name="Wang L."/>
        </authorList>
    </citation>
    <scope>NUCLEOTIDE SEQUENCE [LARGE SCALE GENOMIC DNA]</scope>
    <source>
        <strain>M66-2</strain>
    </source>
</reference>
<organism>
    <name type="scientific">Vibrio cholerae serotype O1 (strain M66-2)</name>
    <dbReference type="NCBI Taxonomy" id="579112"/>
    <lineage>
        <taxon>Bacteria</taxon>
        <taxon>Pseudomonadati</taxon>
        <taxon>Pseudomonadota</taxon>
        <taxon>Gammaproteobacteria</taxon>
        <taxon>Vibrionales</taxon>
        <taxon>Vibrionaceae</taxon>
        <taxon>Vibrio</taxon>
    </lineage>
</organism>
<proteinExistence type="inferred from homology"/>
<keyword id="KW-0997">Cell inner membrane</keyword>
<keyword id="KW-1003">Cell membrane</keyword>
<keyword id="KW-0472">Membrane</keyword>
<keyword id="KW-0808">Transferase</keyword>
<keyword id="KW-0812">Transmembrane</keyword>
<keyword id="KW-1133">Transmembrane helix</keyword>
<protein>
    <recommendedName>
        <fullName evidence="1">Phosphatidylglycerol--prolipoprotein diacylglyceryl transferase</fullName>
        <ecNumber evidence="1">2.5.1.145</ecNumber>
    </recommendedName>
</protein>
<comment type="function">
    <text evidence="1">Catalyzes the transfer of the diacylglyceryl group from phosphatidylglycerol to the sulfhydryl group of the N-terminal cysteine of a prolipoprotein, the first step in the formation of mature lipoproteins.</text>
</comment>
<comment type="catalytic activity">
    <reaction evidence="1">
        <text>L-cysteinyl-[prolipoprotein] + a 1,2-diacyl-sn-glycero-3-phospho-(1'-sn-glycerol) = an S-1,2-diacyl-sn-glyceryl-L-cysteinyl-[prolipoprotein] + sn-glycerol 1-phosphate + H(+)</text>
        <dbReference type="Rhea" id="RHEA:56712"/>
        <dbReference type="Rhea" id="RHEA-COMP:14679"/>
        <dbReference type="Rhea" id="RHEA-COMP:14680"/>
        <dbReference type="ChEBI" id="CHEBI:15378"/>
        <dbReference type="ChEBI" id="CHEBI:29950"/>
        <dbReference type="ChEBI" id="CHEBI:57685"/>
        <dbReference type="ChEBI" id="CHEBI:64716"/>
        <dbReference type="ChEBI" id="CHEBI:140658"/>
        <dbReference type="EC" id="2.5.1.145"/>
    </reaction>
</comment>
<comment type="pathway">
    <text evidence="1">Protein modification; lipoprotein biosynthesis (diacylglyceryl transfer).</text>
</comment>
<comment type="subcellular location">
    <subcellularLocation>
        <location evidence="1">Cell inner membrane</location>
        <topology evidence="1">Multi-pass membrane protein</topology>
    </subcellularLocation>
</comment>
<comment type="similarity">
    <text evidence="1">Belongs to the Lgt family.</text>
</comment>
<name>LGT_VIBCM</name>
<accession>C3LSS9</accession>
<sequence length="271" mass="30457">MPQGYLQFPNIDPVLFSIGPLAVRWYGLMYLVGFLFAMWLANRRADRAGSGWTREQVSDLLFAGFLGVVIGGRVGYVIFYNFDLFLADPLYLFKVWTGGMSFHGGLLGVITAMFWYARKNQRTFFGVADFVAPLVPFGLGMGRIGNFMNSELWGRVTDVPWAFVFPNGGPLPRHPSQLYEFALEGVVLFFILNWFIGKPRPLGSVSGLFLAGYGTFRFLVEYVREPDAQLGLFGGFISMGQILSLPMVIIGILMMVWSYKRGLYQDRVAAK</sequence>